<organism>
    <name type="scientific">Rattus norvegicus</name>
    <name type="common">Rat</name>
    <dbReference type="NCBI Taxonomy" id="10116"/>
    <lineage>
        <taxon>Eukaryota</taxon>
        <taxon>Metazoa</taxon>
        <taxon>Chordata</taxon>
        <taxon>Craniata</taxon>
        <taxon>Vertebrata</taxon>
        <taxon>Euteleostomi</taxon>
        <taxon>Mammalia</taxon>
        <taxon>Eutheria</taxon>
        <taxon>Euarchontoglires</taxon>
        <taxon>Glires</taxon>
        <taxon>Rodentia</taxon>
        <taxon>Myomorpha</taxon>
        <taxon>Muroidea</taxon>
        <taxon>Muridae</taxon>
        <taxon>Murinae</taxon>
        <taxon>Rattus</taxon>
    </lineage>
</organism>
<accession>P84817</accession>
<accession>B2RZ80</accession>
<accession>D4A5K3</accession>
<feature type="chain" id="PRO_0000233948" description="Mitochondrial fission 1 protein">
    <location>
        <begin position="1"/>
        <end position="152"/>
    </location>
</feature>
<feature type="topological domain" description="Cytoplasmic" evidence="2">
    <location>
        <begin position="1"/>
        <end position="122"/>
    </location>
</feature>
<feature type="transmembrane region" description="Helical" evidence="2">
    <location>
        <begin position="123"/>
        <end position="143"/>
    </location>
</feature>
<feature type="topological domain" description="Mitochondrial intermembrane" evidence="2">
    <location>
        <begin position="144"/>
        <end position="152"/>
    </location>
</feature>
<feature type="repeat" description="TPR" evidence="2">
    <location>
        <begin position="71"/>
        <end position="104"/>
    </location>
</feature>
<feature type="modified residue" description="N-acetylmethionine" evidence="1">
    <location>
        <position position="1"/>
    </location>
</feature>
<feature type="modified residue" description="Phosphoserine" evidence="1">
    <location>
        <position position="10"/>
    </location>
</feature>
<feature type="splice variant" id="VSP_039625" description="In isoform 2 and isoform 3." evidence="4">
    <original>MEAVLNELVSVEDLK</original>
    <variation>MPRDEAAR</variation>
    <location>
        <begin position="1"/>
        <end position="15"/>
    </location>
</feature>
<feature type="splice variant" id="VSP_039626" description="In isoform 2." evidence="4">
    <original>DGLVGMAIVGGMALGVAGLAGLIGLAVSKSKS</original>
    <variation>GDRPHAVCSSSSLRPGPWEHCPHPLHTHSPLSNLPSKGLGSPGAPTLRLYIQVPLFCGGECGQGRG</variation>
    <location>
        <begin position="121"/>
        <end position="152"/>
    </location>
</feature>
<feature type="mutagenesis site" description="Loss of mitochondrial fission-stimulating activity; when associated with A-84; A-91; A-97 and A-98." evidence="3">
    <original>L</original>
    <variation>A</variation>
    <location>
        <position position="77"/>
    </location>
</feature>
<feature type="mutagenesis site" description="Loss of mitochondrial fission-stimulating activity; when associated with A-77; A-91; A-97 and A-98." evidence="3">
    <original>L</original>
    <variation>A</variation>
    <location>
        <position position="84"/>
    </location>
</feature>
<feature type="mutagenesis site" description="Loss of mitochondrial fission-stimulating activity; when associated with A-77; A-84; A-97 and A-98." evidence="3">
    <original>L</original>
    <variation>A</variation>
    <location>
        <position position="91"/>
    </location>
</feature>
<feature type="mutagenesis site" description="Loss of mitochondrial fission-stimulating activity; when associated with A-77; A-84; A-91 and A-98." evidence="3">
    <original>L</original>
    <variation>A</variation>
    <location>
        <position position="97"/>
    </location>
</feature>
<feature type="mutagenesis site" description="Loss of mitochondrial fission-stimulating activity; when associated with A-77; A-84; A-91 and A-97." evidence="3">
    <original>L</original>
    <variation>A</variation>
    <location>
        <position position="98"/>
    </location>
</feature>
<evidence type="ECO:0000250" key="1">
    <source>
        <dbReference type="UniProtKB" id="Q9Y3D6"/>
    </source>
</evidence>
<evidence type="ECO:0000255" key="2"/>
<evidence type="ECO:0000269" key="3">
    <source>
    </source>
</evidence>
<evidence type="ECO:0000303" key="4">
    <source>
    </source>
</evidence>
<evidence type="ECO:0000305" key="5"/>
<evidence type="ECO:0000312" key="6">
    <source>
        <dbReference type="RGD" id="1306668"/>
    </source>
</evidence>
<gene>
    <name evidence="1" type="primary">Fis1</name>
    <name evidence="6" type="synonym">Ttc11</name>
</gene>
<reference evidence="5" key="1">
    <citation type="journal article" date="2005" name="Biochem. Biophys. Res. Commun.">
        <title>Analysis of functional domains of rat mitochondrial Fis1, the mitochondrial fission-stimulating protein.</title>
        <authorList>
            <person name="Jofuku A."/>
            <person name="Ishihara N."/>
            <person name="Mihara K."/>
        </authorList>
    </citation>
    <scope>NUCLEOTIDE SEQUENCE [MRNA] (ISOFORM 1)</scope>
    <scope>FUNCTION</scope>
    <scope>SUBCELLULAR LOCATION</scope>
    <scope>MUTAGENESIS OF LEU-77; LEU-84; LEU-91; LEU-97 AND LEU-98</scope>
    <source>
        <tissue evidence="3">Liver</tissue>
    </source>
</reference>
<reference key="2">
    <citation type="journal article" date="2004" name="Nature">
        <title>Genome sequence of the Brown Norway rat yields insights into mammalian evolution.</title>
        <authorList>
            <person name="Gibbs R.A."/>
            <person name="Weinstock G.M."/>
            <person name="Metzker M.L."/>
            <person name="Muzny D.M."/>
            <person name="Sodergren E.J."/>
            <person name="Scherer S."/>
            <person name="Scott G."/>
            <person name="Steffen D."/>
            <person name="Worley K.C."/>
            <person name="Burch P.E."/>
            <person name="Okwuonu G."/>
            <person name="Hines S."/>
            <person name="Lewis L."/>
            <person name="Deramo C."/>
            <person name="Delgado O."/>
            <person name="Dugan-Rocha S."/>
            <person name="Miner G."/>
            <person name="Morgan M."/>
            <person name="Hawes A."/>
            <person name="Gill R."/>
            <person name="Holt R.A."/>
            <person name="Adams M.D."/>
            <person name="Amanatides P.G."/>
            <person name="Baden-Tillson H."/>
            <person name="Barnstead M."/>
            <person name="Chin S."/>
            <person name="Evans C.A."/>
            <person name="Ferriera S."/>
            <person name="Fosler C."/>
            <person name="Glodek A."/>
            <person name="Gu Z."/>
            <person name="Jennings D."/>
            <person name="Kraft C.L."/>
            <person name="Nguyen T."/>
            <person name="Pfannkoch C.M."/>
            <person name="Sitter C."/>
            <person name="Sutton G.G."/>
            <person name="Venter J.C."/>
            <person name="Woodage T."/>
            <person name="Smith D."/>
            <person name="Lee H.-M."/>
            <person name="Gustafson E."/>
            <person name="Cahill P."/>
            <person name="Kana A."/>
            <person name="Doucette-Stamm L."/>
            <person name="Weinstock K."/>
            <person name="Fechtel K."/>
            <person name="Weiss R.B."/>
            <person name="Dunn D.M."/>
            <person name="Green E.D."/>
            <person name="Blakesley R.W."/>
            <person name="Bouffard G.G."/>
            <person name="De Jong P.J."/>
            <person name="Osoegawa K."/>
            <person name="Zhu B."/>
            <person name="Marra M."/>
            <person name="Schein J."/>
            <person name="Bosdet I."/>
            <person name="Fjell C."/>
            <person name="Jones S."/>
            <person name="Krzywinski M."/>
            <person name="Mathewson C."/>
            <person name="Siddiqui A."/>
            <person name="Wye N."/>
            <person name="McPherson J."/>
            <person name="Zhao S."/>
            <person name="Fraser C.M."/>
            <person name="Shetty J."/>
            <person name="Shatsman S."/>
            <person name="Geer K."/>
            <person name="Chen Y."/>
            <person name="Abramzon S."/>
            <person name="Nierman W.C."/>
            <person name="Havlak P.H."/>
            <person name="Chen R."/>
            <person name="Durbin K.J."/>
            <person name="Egan A."/>
            <person name="Ren Y."/>
            <person name="Song X.-Z."/>
            <person name="Li B."/>
            <person name="Liu Y."/>
            <person name="Qin X."/>
            <person name="Cawley S."/>
            <person name="Cooney A.J."/>
            <person name="D'Souza L.M."/>
            <person name="Martin K."/>
            <person name="Wu J.Q."/>
            <person name="Gonzalez-Garay M.L."/>
            <person name="Jackson A.R."/>
            <person name="Kalafus K.J."/>
            <person name="McLeod M.P."/>
            <person name="Milosavljevic A."/>
            <person name="Virk D."/>
            <person name="Volkov A."/>
            <person name="Wheeler D.A."/>
            <person name="Zhang Z."/>
            <person name="Bailey J.A."/>
            <person name="Eichler E.E."/>
            <person name="Tuzun E."/>
            <person name="Birney E."/>
            <person name="Mongin E."/>
            <person name="Ureta-Vidal A."/>
            <person name="Woodwark C."/>
            <person name="Zdobnov E."/>
            <person name="Bork P."/>
            <person name="Suyama M."/>
            <person name="Torrents D."/>
            <person name="Alexandersson M."/>
            <person name="Trask B.J."/>
            <person name="Young J.M."/>
            <person name="Huang H."/>
            <person name="Wang H."/>
            <person name="Xing H."/>
            <person name="Daniels S."/>
            <person name="Gietzen D."/>
            <person name="Schmidt J."/>
            <person name="Stevens K."/>
            <person name="Vitt U."/>
            <person name="Wingrove J."/>
            <person name="Camara F."/>
            <person name="Mar Alba M."/>
            <person name="Abril J.F."/>
            <person name="Guigo R."/>
            <person name="Smit A."/>
            <person name="Dubchak I."/>
            <person name="Rubin E.M."/>
            <person name="Couronne O."/>
            <person name="Poliakov A."/>
            <person name="Huebner N."/>
            <person name="Ganten D."/>
            <person name="Goesele C."/>
            <person name="Hummel O."/>
            <person name="Kreitler T."/>
            <person name="Lee Y.-A."/>
            <person name="Monti J."/>
            <person name="Schulz H."/>
            <person name="Zimdahl H."/>
            <person name="Himmelbauer H."/>
            <person name="Lehrach H."/>
            <person name="Jacob H.J."/>
            <person name="Bromberg S."/>
            <person name="Gullings-Handley J."/>
            <person name="Jensen-Seaman M.I."/>
            <person name="Kwitek A.E."/>
            <person name="Lazar J."/>
            <person name="Pasko D."/>
            <person name="Tonellato P.J."/>
            <person name="Twigger S."/>
            <person name="Ponting C.P."/>
            <person name="Duarte J.M."/>
            <person name="Rice S."/>
            <person name="Goodstadt L."/>
            <person name="Beatson S.A."/>
            <person name="Emes R.D."/>
            <person name="Winter E.E."/>
            <person name="Webber C."/>
            <person name="Brandt P."/>
            <person name="Nyakatura G."/>
            <person name="Adetobi M."/>
            <person name="Chiaromonte F."/>
            <person name="Elnitski L."/>
            <person name="Eswara P."/>
            <person name="Hardison R.C."/>
            <person name="Hou M."/>
            <person name="Kolbe D."/>
            <person name="Makova K."/>
            <person name="Miller W."/>
            <person name="Nekrutenko A."/>
            <person name="Riemer C."/>
            <person name="Schwartz S."/>
            <person name="Taylor J."/>
            <person name="Yang S."/>
            <person name="Zhang Y."/>
            <person name="Lindpaintner K."/>
            <person name="Andrews T.D."/>
            <person name="Caccamo M."/>
            <person name="Clamp M."/>
            <person name="Clarke L."/>
            <person name="Curwen V."/>
            <person name="Durbin R.M."/>
            <person name="Eyras E."/>
            <person name="Searle S.M."/>
            <person name="Cooper G.M."/>
            <person name="Batzoglou S."/>
            <person name="Brudno M."/>
            <person name="Sidow A."/>
            <person name="Stone E.A."/>
            <person name="Payseur B.A."/>
            <person name="Bourque G."/>
            <person name="Lopez-Otin C."/>
            <person name="Puente X.S."/>
            <person name="Chakrabarti K."/>
            <person name="Chatterji S."/>
            <person name="Dewey C."/>
            <person name="Pachter L."/>
            <person name="Bray N."/>
            <person name="Yap V.B."/>
            <person name="Caspi A."/>
            <person name="Tesler G."/>
            <person name="Pevzner P.A."/>
            <person name="Haussler D."/>
            <person name="Roskin K.M."/>
            <person name="Baertsch R."/>
            <person name="Clawson H."/>
            <person name="Furey T.S."/>
            <person name="Hinrichs A.S."/>
            <person name="Karolchik D."/>
            <person name="Kent W.J."/>
            <person name="Rosenbloom K.R."/>
            <person name="Trumbower H."/>
            <person name="Weirauch M."/>
            <person name="Cooper D.N."/>
            <person name="Stenson P.D."/>
            <person name="Ma B."/>
            <person name="Brent M."/>
            <person name="Arumugam M."/>
            <person name="Shteynberg D."/>
            <person name="Copley R.R."/>
            <person name="Taylor M.S."/>
            <person name="Riethman H."/>
            <person name="Mudunuri U."/>
            <person name="Peterson J."/>
            <person name="Guyer M."/>
            <person name="Felsenfeld A."/>
            <person name="Old S."/>
            <person name="Mockrin S."/>
            <person name="Collins F.S."/>
        </authorList>
    </citation>
    <scope>NUCLEOTIDE SEQUENCE [LARGE SCALE GENOMIC DNA]</scope>
    <source>
        <strain>Brown Norway</strain>
    </source>
</reference>
<reference key="3">
    <citation type="submission" date="2005-07" db="EMBL/GenBank/DDBJ databases">
        <authorList>
            <person name="Mural R.J."/>
            <person name="Adams M.D."/>
            <person name="Myers E.W."/>
            <person name="Smith H.O."/>
            <person name="Venter J.C."/>
        </authorList>
    </citation>
    <scope>NUCLEOTIDE SEQUENCE [LARGE SCALE GENOMIC DNA]</scope>
</reference>
<reference key="4">
    <citation type="journal article" date="2004" name="Genome Res.">
        <title>The status, quality, and expansion of the NIH full-length cDNA project: the Mammalian Gene Collection (MGC).</title>
        <authorList>
            <consortium name="The MGC Project Team"/>
        </authorList>
    </citation>
    <scope>NUCLEOTIDE SEQUENCE [LARGE SCALE MRNA] (ISOFORM 2)</scope>
    <source>
        <tissue>Spleen</tissue>
    </source>
</reference>
<protein>
    <recommendedName>
        <fullName>Mitochondrial fission 1 protein</fullName>
    </recommendedName>
    <alternativeName>
        <fullName>FIS1 homolog</fullName>
        <shortName>rFis1</shortName>
    </alternativeName>
    <alternativeName>
        <fullName>Tetratricopeptide repeat protein 11</fullName>
        <shortName>TPR repeat protein 11</shortName>
    </alternativeName>
</protein>
<keyword id="KW-0007">Acetylation</keyword>
<keyword id="KW-0025">Alternative splicing</keyword>
<keyword id="KW-0053">Apoptosis</keyword>
<keyword id="KW-0472">Membrane</keyword>
<keyword id="KW-0496">Mitochondrion</keyword>
<keyword id="KW-1000">Mitochondrion outer membrane</keyword>
<keyword id="KW-0576">Peroxisome</keyword>
<keyword id="KW-0597">Phosphoprotein</keyword>
<keyword id="KW-1185">Reference proteome</keyword>
<keyword id="KW-0802">TPR repeat</keyword>
<keyword id="KW-0812">Transmembrane</keyword>
<keyword id="KW-1133">Transmembrane helix</keyword>
<keyword id="KW-0832">Ubl conjugation</keyword>
<sequence length="152" mass="16995">MEAVLNELVSVEDLKNFERKFQSEQAAGSVSKSTQFEYAWCLVRSKYNDDIRRGIVLLEELLPKGSKEEQRDYVFYLAVGNYRLKEYEKALKYVRGLLQTEPQNNQAKELERLIDKAMKKDGLVGMAIVGGMALGVAGLAGLIGLAVSKSKS</sequence>
<dbReference type="EMBL" id="AC111745">
    <property type="status" value="NOT_ANNOTATED_CDS"/>
    <property type="molecule type" value="Genomic_DNA"/>
</dbReference>
<dbReference type="EMBL" id="CH473973">
    <property type="protein sequence ID" value="EDM13301.1"/>
    <property type="molecule type" value="Genomic_DNA"/>
</dbReference>
<dbReference type="EMBL" id="BC167057">
    <property type="protein sequence ID" value="AAI67057.1"/>
    <property type="molecule type" value="mRNA"/>
</dbReference>
<dbReference type="RefSeq" id="NP_001099389.1">
    <molecule id="P84817-3"/>
    <property type="nucleotide sequence ID" value="NM_001105919.2"/>
</dbReference>
<dbReference type="RefSeq" id="NP_001387980.1">
    <molecule id="P84817-1"/>
    <property type="nucleotide sequence ID" value="NM_001401051.1"/>
</dbReference>
<dbReference type="RefSeq" id="XP_006249184.1">
    <molecule id="P84817-2"/>
    <property type="nucleotide sequence ID" value="XM_006249122.5"/>
</dbReference>
<dbReference type="RefSeq" id="XP_006249185.1">
    <property type="nucleotide sequence ID" value="XM_006249123.3"/>
</dbReference>
<dbReference type="SMR" id="P84817"/>
<dbReference type="BioGRID" id="252608">
    <property type="interactions" value="1"/>
</dbReference>
<dbReference type="FunCoup" id="P84817">
    <property type="interactions" value="2499"/>
</dbReference>
<dbReference type="STRING" id="10116.ENSRNOP00000061895"/>
<dbReference type="GlyGen" id="P84817">
    <property type="glycosylation" value="1 site, 1 O-linked glycan (1 site)"/>
</dbReference>
<dbReference type="iPTMnet" id="P84817"/>
<dbReference type="PhosphoSitePlus" id="P84817"/>
<dbReference type="SwissPalm" id="P84817"/>
<dbReference type="jPOST" id="P84817"/>
<dbReference type="PaxDb" id="10116-ENSRNOP00000061895"/>
<dbReference type="Ensembl" id="ENSRNOT00000001924.9">
    <molecule id="P84817-1"/>
    <property type="protein sequence ID" value="ENSRNOP00000001924.5"/>
    <property type="gene ID" value="ENSRNOG00000001420.9"/>
</dbReference>
<dbReference type="Ensembl" id="ENSRNOT00000063901.4">
    <molecule id="P84817-2"/>
    <property type="protein sequence ID" value="ENSRNOP00000061895.2"/>
    <property type="gene ID" value="ENSRNOG00000001420.9"/>
</dbReference>
<dbReference type="GeneID" id="288584"/>
<dbReference type="KEGG" id="rno:288584"/>
<dbReference type="UCSC" id="RGD:1306668">
    <molecule id="P84817-1"/>
    <property type="organism name" value="rat"/>
</dbReference>
<dbReference type="AGR" id="RGD:1306668"/>
<dbReference type="CTD" id="51024"/>
<dbReference type="RGD" id="1306668">
    <property type="gene designation" value="Fis1"/>
</dbReference>
<dbReference type="eggNOG" id="KOG3364">
    <property type="taxonomic scope" value="Eukaryota"/>
</dbReference>
<dbReference type="GeneTree" id="ENSGT00390000000592"/>
<dbReference type="HOGENOM" id="CLU_1503028_0_0_1"/>
<dbReference type="InParanoid" id="P84817"/>
<dbReference type="OrthoDB" id="421154at2759"/>
<dbReference type="PhylomeDB" id="P84817"/>
<dbReference type="TreeFam" id="TF315180"/>
<dbReference type="Reactome" id="R-RNO-9603798">
    <property type="pathway name" value="Class I peroxisomal membrane protein import"/>
</dbReference>
<dbReference type="PRO" id="PR:P84817"/>
<dbReference type="Proteomes" id="UP000002494">
    <property type="component" value="Chromosome 12"/>
</dbReference>
<dbReference type="Proteomes" id="UP000234681">
    <property type="component" value="Chromosome 12"/>
</dbReference>
<dbReference type="Bgee" id="ENSRNOG00000001420">
    <property type="expression patterns" value="Expressed in duodenum and 19 other cell types or tissues"/>
</dbReference>
<dbReference type="GO" id="GO:0005741">
    <property type="term" value="C:mitochondrial outer membrane"/>
    <property type="evidence" value="ECO:0000314"/>
    <property type="project" value="RGD"/>
</dbReference>
<dbReference type="GO" id="GO:0005739">
    <property type="term" value="C:mitochondrion"/>
    <property type="evidence" value="ECO:0000266"/>
    <property type="project" value="RGD"/>
</dbReference>
<dbReference type="GO" id="GO:0005778">
    <property type="term" value="C:peroxisomal membrane"/>
    <property type="evidence" value="ECO:0000314"/>
    <property type="project" value="RGD"/>
</dbReference>
<dbReference type="GO" id="GO:0005777">
    <property type="term" value="C:peroxisome"/>
    <property type="evidence" value="ECO:0000314"/>
    <property type="project" value="HGNC-UCL"/>
</dbReference>
<dbReference type="GO" id="GO:0032991">
    <property type="term" value="C:protein-containing complex"/>
    <property type="evidence" value="ECO:0000266"/>
    <property type="project" value="RGD"/>
</dbReference>
<dbReference type="GO" id="GO:0042802">
    <property type="term" value="F:identical protein binding"/>
    <property type="evidence" value="ECO:0000266"/>
    <property type="project" value="RGD"/>
</dbReference>
<dbReference type="GO" id="GO:0008289">
    <property type="term" value="F:lipid binding"/>
    <property type="evidence" value="ECO:0000266"/>
    <property type="project" value="RGD"/>
</dbReference>
<dbReference type="GO" id="GO:0060090">
    <property type="term" value="F:molecular adaptor activity"/>
    <property type="evidence" value="ECO:0000266"/>
    <property type="project" value="RGD"/>
</dbReference>
<dbReference type="GO" id="GO:0071333">
    <property type="term" value="P:cellular response to glucose stimulus"/>
    <property type="evidence" value="ECO:0000270"/>
    <property type="project" value="RGD"/>
</dbReference>
<dbReference type="GO" id="GO:0071396">
    <property type="term" value="P:cellular response to lipid"/>
    <property type="evidence" value="ECO:0000270"/>
    <property type="project" value="RGD"/>
</dbReference>
<dbReference type="GO" id="GO:1901653">
    <property type="term" value="P:cellular response to peptide"/>
    <property type="evidence" value="ECO:0000314"/>
    <property type="project" value="RGD"/>
</dbReference>
<dbReference type="GO" id="GO:0097237">
    <property type="term" value="P:cellular response to toxic substance"/>
    <property type="evidence" value="ECO:0000270"/>
    <property type="project" value="RGD"/>
</dbReference>
<dbReference type="GO" id="GO:0000266">
    <property type="term" value="P:mitochondrial fission"/>
    <property type="evidence" value="ECO:0000250"/>
    <property type="project" value="UniProtKB"/>
</dbReference>
<dbReference type="GO" id="GO:0043653">
    <property type="term" value="P:mitochondrial fragmentation involved in apoptotic process"/>
    <property type="evidence" value="ECO:0000315"/>
    <property type="project" value="RGD"/>
</dbReference>
<dbReference type="GO" id="GO:0007005">
    <property type="term" value="P:mitochondrion organization"/>
    <property type="evidence" value="ECO:0000266"/>
    <property type="project" value="RGD"/>
</dbReference>
<dbReference type="GO" id="GO:1903579">
    <property type="term" value="P:negative regulation of ATP metabolic process"/>
    <property type="evidence" value="ECO:0000266"/>
    <property type="project" value="RGD"/>
</dbReference>
<dbReference type="GO" id="GO:2000192">
    <property type="term" value="P:negative regulation of fatty acid transport"/>
    <property type="evidence" value="ECO:0000266"/>
    <property type="project" value="RGD"/>
</dbReference>
<dbReference type="GO" id="GO:0016559">
    <property type="term" value="P:peroxisome fission"/>
    <property type="evidence" value="ECO:0000250"/>
    <property type="project" value="UniProtKB"/>
</dbReference>
<dbReference type="GO" id="GO:2001244">
    <property type="term" value="P:positive regulation of intrinsic apoptotic signaling pathway"/>
    <property type="evidence" value="ECO:0000266"/>
    <property type="project" value="RGD"/>
</dbReference>
<dbReference type="GO" id="GO:0090141">
    <property type="term" value="P:positive regulation of mitochondrial fission"/>
    <property type="evidence" value="ECO:0000315"/>
    <property type="project" value="RGD"/>
</dbReference>
<dbReference type="GO" id="GO:0043525">
    <property type="term" value="P:positive regulation of neuron apoptotic process"/>
    <property type="evidence" value="ECO:0000315"/>
    <property type="project" value="RGD"/>
</dbReference>
<dbReference type="GO" id="GO:0006626">
    <property type="term" value="P:protein targeting to mitochondrion"/>
    <property type="evidence" value="ECO:0000266"/>
    <property type="project" value="RGD"/>
</dbReference>
<dbReference type="GO" id="GO:0034976">
    <property type="term" value="P:response to endoplasmic reticulum stress"/>
    <property type="evidence" value="ECO:0000315"/>
    <property type="project" value="RGD"/>
</dbReference>
<dbReference type="GO" id="GO:1905395">
    <property type="term" value="P:response to flavonoid"/>
    <property type="evidence" value="ECO:0000270"/>
    <property type="project" value="RGD"/>
</dbReference>
<dbReference type="GO" id="GO:1902617">
    <property type="term" value="P:response to fluoride"/>
    <property type="evidence" value="ECO:0000270"/>
    <property type="project" value="RGD"/>
</dbReference>
<dbReference type="GO" id="GO:1990910">
    <property type="term" value="P:response to hypobaric hypoxia"/>
    <property type="evidence" value="ECO:0000270"/>
    <property type="project" value="RGD"/>
</dbReference>
<dbReference type="GO" id="GO:0014850">
    <property type="term" value="P:response to muscle activity"/>
    <property type="evidence" value="ECO:0000270"/>
    <property type="project" value="RGD"/>
</dbReference>
<dbReference type="GO" id="GO:0031667">
    <property type="term" value="P:response to nutrient levels"/>
    <property type="evidence" value="ECO:0000270"/>
    <property type="project" value="RGD"/>
</dbReference>
<dbReference type="CDD" id="cd12212">
    <property type="entry name" value="Fis1"/>
    <property type="match status" value="1"/>
</dbReference>
<dbReference type="FunFam" id="1.25.40.10:FF:000147">
    <property type="entry name" value="Mitochondrial fission 1 protein"/>
    <property type="match status" value="1"/>
</dbReference>
<dbReference type="Gene3D" id="1.25.40.10">
    <property type="entry name" value="Tetratricopeptide repeat domain"/>
    <property type="match status" value="1"/>
</dbReference>
<dbReference type="InterPro" id="IPR016543">
    <property type="entry name" value="Fis1"/>
</dbReference>
<dbReference type="InterPro" id="IPR033745">
    <property type="entry name" value="Fis1_cytosol"/>
</dbReference>
<dbReference type="InterPro" id="IPR028061">
    <property type="entry name" value="Fis1_TPR_C"/>
</dbReference>
<dbReference type="InterPro" id="IPR028058">
    <property type="entry name" value="Fis1_TPR_N"/>
</dbReference>
<dbReference type="InterPro" id="IPR011990">
    <property type="entry name" value="TPR-like_helical_dom_sf"/>
</dbReference>
<dbReference type="PANTHER" id="PTHR13247:SF0">
    <property type="entry name" value="MITOCHONDRIAL FISSION 1 PROTEIN"/>
    <property type="match status" value="1"/>
</dbReference>
<dbReference type="PANTHER" id="PTHR13247">
    <property type="entry name" value="TETRATRICOPEPTIDE REPEAT PROTEIN 11 TPR REPEAT PROTEIN 11"/>
    <property type="match status" value="1"/>
</dbReference>
<dbReference type="Pfam" id="PF14853">
    <property type="entry name" value="Fis1_TPR_C"/>
    <property type="match status" value="1"/>
</dbReference>
<dbReference type="Pfam" id="PF14852">
    <property type="entry name" value="Fis1_TPR_N"/>
    <property type="match status" value="1"/>
</dbReference>
<dbReference type="PIRSF" id="PIRSF008835">
    <property type="entry name" value="TPR_repeat_11_Fis1"/>
    <property type="match status" value="1"/>
</dbReference>
<dbReference type="SUPFAM" id="SSF48452">
    <property type="entry name" value="TPR-like"/>
    <property type="match status" value="1"/>
</dbReference>
<proteinExistence type="evidence at protein level"/>
<name>FIS1_RAT</name>
<comment type="function">
    <text evidence="1 3">Involved in the fragmentation of the mitochondrial network and its perinuclear clustering (PubMed:15979461). Plays a minor role in the recruitment and association of the fission mediator dynamin-related protein 1 (DNM1L) to the mitochondrial surface and mitochondrial fission (By similarity). May not be essential for the assembly of functional fission complexes and the subsequent membrane scission event (By similarity). Also mediates peroxisomal fission (By similarity). May act when the products of fission are directed toward mitochondrial homeostasis, mitophagy, or apoptosis (By similarity). Can induce cytochrome c release from the mitochondrion to the cytosol, ultimately leading to apoptosis (By similarity).</text>
</comment>
<comment type="subunit">
    <text evidence="1">Interacts with DNM1L/DLP1 through the TPR region; may form part of a larger protein complex at the endoplasmic reticulum-mitochondrial interface during mitochondrial fission. Interacts with MARCHF5. Interacts with MIEF1. Interacts with PEX11A, PEX11B and PEX11G.</text>
</comment>
<comment type="subcellular location">
    <subcellularLocation>
        <location evidence="3">Mitochondrion outer membrane</location>
        <topology evidence="3">Single-pass membrane protein</topology>
    </subcellularLocation>
    <subcellularLocation>
        <location evidence="3">Peroxisome membrane</location>
        <topology evidence="3">Single-pass membrane protein</topology>
    </subcellularLocation>
</comment>
<comment type="alternative products">
    <event type="alternative splicing"/>
    <isoform>
        <id>P84817-1</id>
        <name>1</name>
        <sequence type="displayed"/>
    </isoform>
    <isoform>
        <id>P84817-2</id>
        <name>2</name>
        <sequence type="described" ref="VSP_039625 VSP_039626"/>
    </isoform>
    <isoform>
        <id>P84817-3</id>
        <name>3</name>
        <sequence type="described" ref="VSP_039625"/>
    </isoform>
</comment>
<comment type="domain">
    <text evidence="1">The C-terminus is required for mitochondrial or peroxisomal localization, while the N-terminus is necessary for mitochondrial or peroxisomal fission, localization and regulation of the interaction with DNM1L.</text>
</comment>
<comment type="PTM">
    <text evidence="1">Ubiquitinated by MARCHF5.</text>
</comment>
<comment type="similarity">
    <text evidence="5">Belongs to the FIS1 family.</text>
</comment>